<comment type="function">
    <text evidence="1">Required for H(+) efflux immediately after light irradiation to form a rapid H(+) concentration gradient across the thylakoid membranes. Together with PxcL, contributes to transient H(+) uptake following dark to light transition.</text>
</comment>
<comment type="subcellular location">
    <subcellularLocation>
        <location evidence="1">Cell inner membrane</location>
        <topology evidence="1">Multi-pass membrane protein</topology>
    </subcellularLocation>
</comment>
<comment type="similarity">
    <text evidence="1">Belongs to the CemA family.</text>
</comment>
<protein>
    <recommendedName>
        <fullName evidence="1">Proton extrusion protein PxcA</fullName>
    </recommendedName>
</protein>
<feature type="chain" id="PRO_0000293503" description="Proton extrusion protein PxcA">
    <location>
        <begin position="1"/>
        <end position="460"/>
    </location>
</feature>
<feature type="transmembrane region" description="Helical" evidence="1">
    <location>
        <begin position="242"/>
        <end position="262"/>
    </location>
</feature>
<feature type="transmembrane region" description="Helical" evidence="1">
    <location>
        <begin position="337"/>
        <end position="357"/>
    </location>
</feature>
<feature type="transmembrane region" description="Helical" evidence="1">
    <location>
        <begin position="373"/>
        <end position="393"/>
    </location>
</feature>
<feature type="transmembrane region" description="Helical" evidence="1">
    <location>
        <begin position="420"/>
        <end position="440"/>
    </location>
</feature>
<feature type="region of interest" description="Disordered" evidence="2">
    <location>
        <begin position="84"/>
        <end position="194"/>
    </location>
</feature>
<feature type="compositionally biased region" description="Basic and acidic residues" evidence="2">
    <location>
        <begin position="114"/>
        <end position="136"/>
    </location>
</feature>
<feature type="compositionally biased region" description="Polar residues" evidence="2">
    <location>
        <begin position="167"/>
        <end position="194"/>
    </location>
</feature>
<proteinExistence type="inferred from homology"/>
<name>PXCA_SYNJA</name>
<dbReference type="EMBL" id="CP000239">
    <property type="protein sequence ID" value="ABD00679.1"/>
    <property type="molecule type" value="Genomic_DNA"/>
</dbReference>
<dbReference type="SMR" id="Q2JRR7"/>
<dbReference type="STRING" id="321327.CYA_2560"/>
<dbReference type="KEGG" id="cya:CYA_2560"/>
<dbReference type="eggNOG" id="ENOG502Z8DN">
    <property type="taxonomic scope" value="Bacteria"/>
</dbReference>
<dbReference type="HOGENOM" id="CLU_690401_0_0_3"/>
<dbReference type="OrthoDB" id="418298at2"/>
<dbReference type="Proteomes" id="UP000008818">
    <property type="component" value="Chromosome"/>
</dbReference>
<dbReference type="GO" id="GO:0005886">
    <property type="term" value="C:plasma membrane"/>
    <property type="evidence" value="ECO:0007669"/>
    <property type="project" value="UniProtKB-SubCell"/>
</dbReference>
<dbReference type="GO" id="GO:0015078">
    <property type="term" value="F:proton transmembrane transporter activity"/>
    <property type="evidence" value="ECO:0007669"/>
    <property type="project" value="UniProtKB-UniRule"/>
</dbReference>
<dbReference type="HAMAP" id="MF_01308">
    <property type="entry name" value="CemA_PxcA"/>
    <property type="match status" value="1"/>
</dbReference>
<dbReference type="InterPro" id="IPR004282">
    <property type="entry name" value="CemA"/>
</dbReference>
<dbReference type="NCBIfam" id="NF002706">
    <property type="entry name" value="PRK02507.1-5"/>
    <property type="match status" value="1"/>
</dbReference>
<dbReference type="PANTHER" id="PTHR33650:SF2">
    <property type="entry name" value="CHLOROPLAST ENVELOPE MEMBRANE PROTEIN"/>
    <property type="match status" value="1"/>
</dbReference>
<dbReference type="PANTHER" id="PTHR33650">
    <property type="entry name" value="CHLOROPLAST ENVELOPE MEMBRANE PROTEIN-RELATED"/>
    <property type="match status" value="1"/>
</dbReference>
<dbReference type="Pfam" id="PF03040">
    <property type="entry name" value="CemA"/>
    <property type="match status" value="1"/>
</dbReference>
<accession>Q2JRR7</accession>
<keyword id="KW-0997">Cell inner membrane</keyword>
<keyword id="KW-1003">Cell membrane</keyword>
<keyword id="KW-0375">Hydrogen ion transport</keyword>
<keyword id="KW-0406">Ion transport</keyword>
<keyword id="KW-0472">Membrane</keyword>
<keyword id="KW-0812">Transmembrane</keyword>
<keyword id="KW-1133">Transmembrane helix</keyword>
<keyword id="KW-0813">Transport</keyword>
<evidence type="ECO:0000255" key="1">
    <source>
        <dbReference type="HAMAP-Rule" id="MF_01308"/>
    </source>
</evidence>
<evidence type="ECO:0000256" key="2">
    <source>
        <dbReference type="SAM" id="MobiDB-lite"/>
    </source>
</evidence>
<reference key="1">
    <citation type="journal article" date="2007" name="ISME J.">
        <title>Population level functional diversity in a microbial community revealed by comparative genomic and metagenomic analyses.</title>
        <authorList>
            <person name="Bhaya D."/>
            <person name="Grossman A.R."/>
            <person name="Steunou A.-S."/>
            <person name="Khuri N."/>
            <person name="Cohan F.M."/>
            <person name="Hamamura N."/>
            <person name="Melendrez M.C."/>
            <person name="Bateson M.M."/>
            <person name="Ward D.M."/>
            <person name="Heidelberg J.F."/>
        </authorList>
    </citation>
    <scope>NUCLEOTIDE SEQUENCE [LARGE SCALE GENOMIC DNA]</scope>
    <source>
        <strain>JA-3-3Ab</strain>
    </source>
</reference>
<sequence>MGESVLSRLGQWISSTPLRSLDRAYEAALRIKAIEDRYFQGGSIGSNGNHGQNTSRYFQIQLRQELRQIDLSLAEFRASSVFSRLPDPEQNGSGPPFSSDKDQAKEAPVGPSENDGKDAENGRQSRDPSILEKLEFIDQVTSRYKRPAAQPRSTSPPPKSQEQPEPLTSSQPEPSDPSIKTNLAKTNLDNSNAPVASKTALLPRSILRTANQIRRELSSQAEEELLQEYRSQRTRTLVAVRFLLLLAILPLLVQIFSKHFLFGPLVDRFQPREPTILALSYEFQEKALSEFEFFKEKIEFERALHHQSPELDLESEDQLSKKAEELLQKYSRKNLEGLKNVLADVLSLLVFGWLILIGREEIEVLKSFLDRLIYGLSDSAKAFIIILFTDVFVGYHSPHGWEVLLSSLAAHLGLPENRNFIYGFIATFPVFLDTLFKYWIFRYLNRVSPSAVATYHAMND</sequence>
<gene>
    <name evidence="1" type="primary">pxcA</name>
    <name type="ordered locus">CYA_2560</name>
</gene>
<organism>
    <name type="scientific">Synechococcus sp. (strain JA-3-3Ab)</name>
    <name type="common">Cyanobacteria bacterium Yellowstone A-Prime</name>
    <dbReference type="NCBI Taxonomy" id="321327"/>
    <lineage>
        <taxon>Bacteria</taxon>
        <taxon>Bacillati</taxon>
        <taxon>Cyanobacteriota</taxon>
        <taxon>Cyanophyceae</taxon>
        <taxon>Synechococcales</taxon>
        <taxon>Synechococcaceae</taxon>
        <taxon>Synechococcus</taxon>
    </lineage>
</organism>